<evidence type="ECO:0000255" key="1">
    <source>
        <dbReference type="HAMAP-Rule" id="MF_00063"/>
    </source>
</evidence>
<protein>
    <recommendedName>
        <fullName evidence="1">Phosphoadenosine 5'-phosphosulfate reductase</fullName>
        <shortName evidence="1">PAPS reductase</shortName>
        <ecNumber evidence="1">1.8.4.8</ecNumber>
    </recommendedName>
    <alternativeName>
        <fullName evidence="1">3'-phosphoadenylylsulfate reductase</fullName>
    </alternativeName>
    <alternativeName>
        <fullName evidence="1">PAPS reductase, thioredoxin dependent</fullName>
    </alternativeName>
    <alternativeName>
        <fullName evidence="1">PAPS sulfotransferase</fullName>
    </alternativeName>
    <alternativeName>
        <fullName evidence="1">PAdoPS reductase</fullName>
    </alternativeName>
</protein>
<sequence>MPALLPSLTEINAQLADQAATQIIQWAATEFGSGLVLSTSFGIQSAVMLHLATQVQPDIPVIWIDTGYLPTETYRFAAELTERLKLNLKVYQSEISPARMEALYGRLWESESVEDFNRYDQMRKVEPMNRALQELGATAWLSGVRRQQTAHRQSMEIVELKRDRYAIRPILGWHSRDVYQYLTAHDLPYHPLFDQGYVTVGDWHSSRPLQADDSDERSTRFRGLKQECGLHL</sequence>
<dbReference type="EC" id="1.8.4.8" evidence="1"/>
<dbReference type="EMBL" id="AP008231">
    <property type="protein sequence ID" value="BAD79790.1"/>
    <property type="molecule type" value="Genomic_DNA"/>
</dbReference>
<dbReference type="RefSeq" id="WP_011243910.1">
    <property type="nucleotide sequence ID" value="NZ_CP085785.1"/>
</dbReference>
<dbReference type="SMR" id="Q5N1N0"/>
<dbReference type="KEGG" id="syc:syc1600_d"/>
<dbReference type="eggNOG" id="COG0175">
    <property type="taxonomic scope" value="Bacteria"/>
</dbReference>
<dbReference type="UniPathway" id="UPA00140">
    <property type="reaction ID" value="UER00206"/>
</dbReference>
<dbReference type="Proteomes" id="UP000001175">
    <property type="component" value="Chromosome"/>
</dbReference>
<dbReference type="GO" id="GO:0005737">
    <property type="term" value="C:cytoplasm"/>
    <property type="evidence" value="ECO:0007669"/>
    <property type="project" value="UniProtKB-SubCell"/>
</dbReference>
<dbReference type="GO" id="GO:0004604">
    <property type="term" value="F:phosphoadenylyl-sulfate reductase (thioredoxin) activity"/>
    <property type="evidence" value="ECO:0007669"/>
    <property type="project" value="UniProtKB-UniRule"/>
</dbReference>
<dbReference type="GO" id="GO:0070814">
    <property type="term" value="P:hydrogen sulfide biosynthetic process"/>
    <property type="evidence" value="ECO:0007669"/>
    <property type="project" value="UniProtKB-UniRule"/>
</dbReference>
<dbReference type="GO" id="GO:0019379">
    <property type="term" value="P:sulfate assimilation, phosphoadenylyl sulfate reduction by phosphoadenylyl-sulfate reductase (thioredoxin)"/>
    <property type="evidence" value="ECO:0007669"/>
    <property type="project" value="UniProtKB-UniRule"/>
</dbReference>
<dbReference type="CDD" id="cd23945">
    <property type="entry name" value="PAPS_reductase"/>
    <property type="match status" value="1"/>
</dbReference>
<dbReference type="Gene3D" id="3.40.50.620">
    <property type="entry name" value="HUPs"/>
    <property type="match status" value="1"/>
</dbReference>
<dbReference type="HAMAP" id="MF_00063">
    <property type="entry name" value="CysH"/>
    <property type="match status" value="1"/>
</dbReference>
<dbReference type="InterPro" id="IPR004511">
    <property type="entry name" value="PAPS/APS_Rdtase"/>
</dbReference>
<dbReference type="InterPro" id="IPR002500">
    <property type="entry name" value="PAPS_reduct_dom"/>
</dbReference>
<dbReference type="InterPro" id="IPR011800">
    <property type="entry name" value="PAPS_reductase_CysH"/>
</dbReference>
<dbReference type="InterPro" id="IPR014729">
    <property type="entry name" value="Rossmann-like_a/b/a_fold"/>
</dbReference>
<dbReference type="NCBIfam" id="TIGR00434">
    <property type="entry name" value="cysH"/>
    <property type="match status" value="1"/>
</dbReference>
<dbReference type="NCBIfam" id="TIGR02057">
    <property type="entry name" value="PAPS_reductase"/>
    <property type="match status" value="1"/>
</dbReference>
<dbReference type="NCBIfam" id="NF002537">
    <property type="entry name" value="PRK02090.1"/>
    <property type="match status" value="1"/>
</dbReference>
<dbReference type="PANTHER" id="PTHR46509">
    <property type="entry name" value="PHOSPHOADENOSINE PHOSPHOSULFATE REDUCTASE"/>
    <property type="match status" value="1"/>
</dbReference>
<dbReference type="PANTHER" id="PTHR46509:SF1">
    <property type="entry name" value="PHOSPHOADENOSINE PHOSPHOSULFATE REDUCTASE"/>
    <property type="match status" value="1"/>
</dbReference>
<dbReference type="Pfam" id="PF01507">
    <property type="entry name" value="PAPS_reduct"/>
    <property type="match status" value="1"/>
</dbReference>
<dbReference type="PIRSF" id="PIRSF000857">
    <property type="entry name" value="PAPS_reductase"/>
    <property type="match status" value="1"/>
</dbReference>
<dbReference type="SUPFAM" id="SSF52402">
    <property type="entry name" value="Adenine nucleotide alpha hydrolases-like"/>
    <property type="match status" value="1"/>
</dbReference>
<gene>
    <name evidence="1" type="primary">cysH</name>
    <name type="ordered locus">syc1600_d</name>
</gene>
<reference key="1">
    <citation type="journal article" date="2007" name="Photosyn. Res.">
        <title>Complete nucleotide sequence of the freshwater unicellular cyanobacterium Synechococcus elongatus PCC 6301 chromosome: gene content and organization.</title>
        <authorList>
            <person name="Sugita C."/>
            <person name="Ogata K."/>
            <person name="Shikata M."/>
            <person name="Jikuya H."/>
            <person name="Takano J."/>
            <person name="Furumichi M."/>
            <person name="Kanehisa M."/>
            <person name="Omata T."/>
            <person name="Sugiura M."/>
            <person name="Sugita M."/>
        </authorList>
    </citation>
    <scope>NUCLEOTIDE SEQUENCE [LARGE SCALE GENOMIC DNA]</scope>
    <source>
        <strain>ATCC 27144 / PCC 6301 / SAUG 1402/1</strain>
    </source>
</reference>
<name>CYSH_SYNP6</name>
<proteinExistence type="inferred from homology"/>
<keyword id="KW-0963">Cytoplasm</keyword>
<keyword id="KW-0560">Oxidoreductase</keyword>
<accession>Q5N1N0</accession>
<comment type="function">
    <text evidence="1">Catalyzes the formation of sulfite from phosphoadenosine 5'-phosphosulfate (PAPS) using thioredoxin as an electron donor.</text>
</comment>
<comment type="catalytic activity">
    <reaction evidence="1">
        <text>[thioredoxin]-disulfide + sulfite + adenosine 3',5'-bisphosphate + 2 H(+) = [thioredoxin]-dithiol + 3'-phosphoadenylyl sulfate</text>
        <dbReference type="Rhea" id="RHEA:11724"/>
        <dbReference type="Rhea" id="RHEA-COMP:10698"/>
        <dbReference type="Rhea" id="RHEA-COMP:10700"/>
        <dbReference type="ChEBI" id="CHEBI:15378"/>
        <dbReference type="ChEBI" id="CHEBI:17359"/>
        <dbReference type="ChEBI" id="CHEBI:29950"/>
        <dbReference type="ChEBI" id="CHEBI:50058"/>
        <dbReference type="ChEBI" id="CHEBI:58339"/>
        <dbReference type="ChEBI" id="CHEBI:58343"/>
        <dbReference type="EC" id="1.8.4.8"/>
    </reaction>
</comment>
<comment type="pathway">
    <text evidence="1">Sulfur metabolism; hydrogen sulfide biosynthesis; sulfite from sulfate: step 3/3.</text>
</comment>
<comment type="subcellular location">
    <subcellularLocation>
        <location evidence="1">Cytoplasm</location>
    </subcellularLocation>
</comment>
<comment type="similarity">
    <text evidence="1">Belongs to the PAPS reductase family. CysH subfamily.</text>
</comment>
<organism>
    <name type="scientific">Synechococcus sp. (strain ATCC 27144 / PCC 6301 / SAUG 1402/1)</name>
    <name type="common">Anacystis nidulans</name>
    <dbReference type="NCBI Taxonomy" id="269084"/>
    <lineage>
        <taxon>Bacteria</taxon>
        <taxon>Bacillati</taxon>
        <taxon>Cyanobacteriota</taxon>
        <taxon>Cyanophyceae</taxon>
        <taxon>Synechococcales</taxon>
        <taxon>Synechococcaceae</taxon>
        <taxon>Synechococcus</taxon>
    </lineage>
</organism>
<feature type="chain" id="PRO_1000008942" description="Phosphoadenosine 5'-phosphosulfate reductase">
    <location>
        <begin position="1"/>
        <end position="232"/>
    </location>
</feature>
<feature type="active site" description="Nucleophile; cysteine thiosulfonate intermediate" evidence="1">
    <location>
        <position position="228"/>
    </location>
</feature>